<comment type="function">
    <molecule>XK-related protein 9, processed form</molecule>
    <text evidence="2">Phospholipid scramblase that promotes phosphatidylserine exposure on apoptotic cell surface (PubMed:25231987). Phosphatidylserine is a specific marker only present at the surface of apoptotic cells and acts as a specific signal for engulfment (PubMed:25231987).</text>
</comment>
<comment type="catalytic activity">
    <molecule>XK-related protein 9, processed form</molecule>
    <reaction evidence="6">
        <text>a 1,2-diacyl-sn-glycero-3-phospho-L-serine(in) = a 1,2-diacyl-sn-glycero-3-phospho-L-serine(out)</text>
        <dbReference type="Rhea" id="RHEA:38663"/>
        <dbReference type="ChEBI" id="CHEBI:57262"/>
    </reaction>
</comment>
<comment type="activity regulation">
    <text evidence="2">Activated upon caspase cleavage to generate the XK-related protein 9, processed form (PubMed:25231987). Does not act prior the onset of apoptosis (PubMed:25231987).</text>
</comment>
<comment type="subcellular location">
    <subcellularLocation>
        <location evidence="2">Cell membrane</location>
        <topology evidence="1">Multi-pass membrane protein</topology>
    </subcellularLocation>
</comment>
<comment type="tissue specificity">
    <text evidence="2">Highly expressed in the small intestines; weakly expressed in the pancreas, liver, stomach, and large intestines.</text>
</comment>
<comment type="PTM">
    <molecule>XK-related protein 9</molecule>
    <text evidence="2">Undergoes proteolytic processing by caspase-3 (CASP3), caspase-6 (CASP6) and caspase-7 (CASP7) to generate the XK-related protein 9, processed form, leading to its activation.</text>
</comment>
<comment type="similarity">
    <text evidence="5">Belongs to the XK family.</text>
</comment>
<gene>
    <name evidence="3 7" type="primary">Xkr9</name>
    <name evidence="7" type="synonym">Gm1620</name>
    <name evidence="4" type="synonym">Xrg9</name>
</gene>
<sequence length="373" mass="43271">MKYTKCNFMMSVLGIIIYVTDLVADIVLSVRYFHDGQYVLGVLTLSFVLCGTLIVHCFSYSWLKADLEKAGQENERYFLLLHCLQGGVFTRYWFALRTGYHVVFKHSDRKSNFMEEQTDPHKEAIDMATDLSMLRLFETYLEGCPQLILQLYAFLECGQANLSQCMVIMVSCCAISWSTVDYQIALRKSLPDKNLLRGLWPKLMYLFYKLLTLLSWMLSVVLLLFVDVRVALLLLLFLWITGFIWAFINHTQFCNSVSMEFLYRIVVGFILVFTFFNIKGQNTKCPMSCYYTVRVLGTLGILTVFWIYPLSIFNSDYFIPISATIVLALLLGIIFLGVYYGNFHPNRNVEPQLDETDGKAPQRDCRIRYFLMD</sequence>
<protein>
    <recommendedName>
        <fullName evidence="5">XK-related protein 9</fullName>
    </recommendedName>
    <component>
        <recommendedName>
            <fullName evidence="6">XK-related protein 9, processed form</fullName>
        </recommendedName>
    </component>
</protein>
<evidence type="ECO:0000255" key="1"/>
<evidence type="ECO:0000269" key="2">
    <source>
    </source>
</evidence>
<evidence type="ECO:0000303" key="3">
    <source>
    </source>
</evidence>
<evidence type="ECO:0000303" key="4">
    <source ref="1"/>
</evidence>
<evidence type="ECO:0000305" key="5"/>
<evidence type="ECO:0000305" key="6">
    <source>
    </source>
</evidence>
<evidence type="ECO:0000312" key="7">
    <source>
        <dbReference type="MGI" id="MGI:2686466"/>
    </source>
</evidence>
<accession>Q5GH62</accession>
<accession>B2RWB3</accession>
<keyword id="KW-0053">Apoptosis</keyword>
<keyword id="KW-1003">Cell membrane</keyword>
<keyword id="KW-0472">Membrane</keyword>
<keyword id="KW-1185">Reference proteome</keyword>
<keyword id="KW-0812">Transmembrane</keyword>
<keyword id="KW-1133">Transmembrane helix</keyword>
<reference key="1">
    <citation type="submission" date="2004-01" db="EMBL/GenBank/DDBJ databases">
        <title>A superfamily of XK-related genes (XRG) widely expressed in vertebrates and invertebrates.</title>
        <authorList>
            <person name="Huang C.-H."/>
            <person name="Chen Y."/>
        </authorList>
    </citation>
    <scope>NUCLEOTIDE SEQUENCE [MRNA]</scope>
    <source>
        <strain>C57BL/6J</strain>
    </source>
</reference>
<reference key="2">
    <citation type="journal article" date="2004" name="Genome Res.">
        <title>The status, quality, and expansion of the NIH full-length cDNA project: the Mammalian Gene Collection (MGC).</title>
        <authorList>
            <consortium name="The MGC Project Team"/>
        </authorList>
    </citation>
    <scope>NUCLEOTIDE SEQUENCE [LARGE SCALE MRNA]</scope>
    <source>
        <tissue>Brain</tissue>
    </source>
</reference>
<reference key="3">
    <citation type="journal article" date="2014" name="J. Biol. Chem.">
        <title>Exposure of phosphatidylserine by Xk-related protein family members during apoptosis.</title>
        <authorList>
            <person name="Suzuki J."/>
            <person name="Imanishi E."/>
            <person name="Nagata S."/>
        </authorList>
    </citation>
    <scope>FUNCTION</scope>
    <scope>CATALYTIC ACTIVITY</scope>
    <scope>ACTIVITY REGULATION</scope>
    <scope>SUBCELLULAR LOCATION</scope>
    <scope>PROTEOLYTIC CLEAVAGE</scope>
    <scope>TISSUE SPECIFICITY</scope>
    <scope>MUTAGENESIS OF 354-ASP--ASP-357</scope>
</reference>
<dbReference type="EMBL" id="AY534255">
    <property type="protein sequence ID" value="AAT07104.1"/>
    <property type="molecule type" value="mRNA"/>
</dbReference>
<dbReference type="EMBL" id="BC147699">
    <property type="protein sequence ID" value="AAI47700.1"/>
    <property type="molecule type" value="mRNA"/>
</dbReference>
<dbReference type="CCDS" id="CCDS14824.1"/>
<dbReference type="RefSeq" id="NP_001011873.1">
    <property type="nucleotide sequence ID" value="NM_001011873.2"/>
</dbReference>
<dbReference type="RefSeq" id="XP_006495610.1">
    <property type="nucleotide sequence ID" value="XM_006495547.4"/>
</dbReference>
<dbReference type="SMR" id="Q5GH62"/>
<dbReference type="FunCoup" id="Q5GH62">
    <property type="interactions" value="799"/>
</dbReference>
<dbReference type="STRING" id="10090.ENSMUSP00000085900"/>
<dbReference type="iPTMnet" id="Q5GH62"/>
<dbReference type="PhosphoSitePlus" id="Q5GH62"/>
<dbReference type="PaxDb" id="10090-ENSMUSP00000085900"/>
<dbReference type="ProteomicsDB" id="300002"/>
<dbReference type="Antibodypedia" id="51209">
    <property type="antibodies" value="7 antibodies from 6 providers"/>
</dbReference>
<dbReference type="DNASU" id="381246"/>
<dbReference type="Ensembl" id="ENSMUST00000088542.4">
    <property type="protein sequence ID" value="ENSMUSP00000085900.4"/>
    <property type="gene ID" value="ENSMUSG00000067813.4"/>
</dbReference>
<dbReference type="GeneID" id="381246"/>
<dbReference type="KEGG" id="mmu:381246"/>
<dbReference type="UCSC" id="uc007aiv.1">
    <property type="organism name" value="mouse"/>
</dbReference>
<dbReference type="AGR" id="MGI:2686466"/>
<dbReference type="CTD" id="389668"/>
<dbReference type="MGI" id="MGI:2686466">
    <property type="gene designation" value="Xkr9"/>
</dbReference>
<dbReference type="VEuPathDB" id="HostDB:ENSMUSG00000067813"/>
<dbReference type="eggNOG" id="KOG4790">
    <property type="taxonomic scope" value="Eukaryota"/>
</dbReference>
<dbReference type="GeneTree" id="ENSGT01110000267146"/>
<dbReference type="HOGENOM" id="CLU_028534_2_0_1"/>
<dbReference type="InParanoid" id="Q5GH62"/>
<dbReference type="OMA" id="RDCRMKY"/>
<dbReference type="OrthoDB" id="8190653at2759"/>
<dbReference type="PhylomeDB" id="Q5GH62"/>
<dbReference type="TreeFam" id="TF316454"/>
<dbReference type="BioGRID-ORCS" id="381246">
    <property type="hits" value="2 hits in 78 CRISPR screens"/>
</dbReference>
<dbReference type="PRO" id="PR:Q5GH62"/>
<dbReference type="Proteomes" id="UP000000589">
    <property type="component" value="Chromosome 1"/>
</dbReference>
<dbReference type="RNAct" id="Q5GH62">
    <property type="molecule type" value="protein"/>
</dbReference>
<dbReference type="Bgee" id="ENSMUSG00000067813">
    <property type="expression patterns" value="Expressed in jejunum and 21 other cell types or tissues"/>
</dbReference>
<dbReference type="GO" id="GO:0005886">
    <property type="term" value="C:plasma membrane"/>
    <property type="evidence" value="ECO:0000314"/>
    <property type="project" value="UniProtKB"/>
</dbReference>
<dbReference type="GO" id="GO:0006915">
    <property type="term" value="P:apoptotic process"/>
    <property type="evidence" value="ECO:0007669"/>
    <property type="project" value="UniProtKB-KW"/>
</dbReference>
<dbReference type="InterPro" id="IPR018629">
    <property type="entry name" value="XK-rel"/>
</dbReference>
<dbReference type="InterPro" id="IPR050895">
    <property type="entry name" value="XK-related_scramblase"/>
</dbReference>
<dbReference type="PANTHER" id="PTHR16024">
    <property type="entry name" value="XK-RELATED PROTEIN"/>
    <property type="match status" value="1"/>
</dbReference>
<dbReference type="PANTHER" id="PTHR16024:SF13">
    <property type="entry name" value="XK-RELATED PROTEIN 9"/>
    <property type="match status" value="1"/>
</dbReference>
<dbReference type="Pfam" id="PF09815">
    <property type="entry name" value="XK-related"/>
    <property type="match status" value="1"/>
</dbReference>
<feature type="chain" id="PRO_0000190797" description="XK-related protein 9">
    <location>
        <begin position="1"/>
        <end position="373"/>
    </location>
</feature>
<feature type="chain" id="PRO_0000453294" description="XK-related protein 9, processed form" evidence="6">
    <location>
        <begin position="1"/>
        <end position="357"/>
    </location>
</feature>
<feature type="transmembrane region" description="Helical" evidence="1">
    <location>
        <begin position="8"/>
        <end position="28"/>
    </location>
</feature>
<feature type="transmembrane region" description="Helical" evidence="1">
    <location>
        <begin position="38"/>
        <end position="58"/>
    </location>
</feature>
<feature type="transmembrane region" description="Helical" evidence="1">
    <location>
        <begin position="166"/>
        <end position="186"/>
    </location>
</feature>
<feature type="transmembrane region" description="Helical" evidence="1">
    <location>
        <begin position="206"/>
        <end position="226"/>
    </location>
</feature>
<feature type="transmembrane region" description="Helical" evidence="1">
    <location>
        <begin position="230"/>
        <end position="250"/>
    </location>
</feature>
<feature type="transmembrane region" description="Helical" evidence="1">
    <location>
        <begin position="256"/>
        <end position="276"/>
    </location>
</feature>
<feature type="transmembrane region" description="Helical" evidence="1">
    <location>
        <begin position="295"/>
        <end position="315"/>
    </location>
</feature>
<feature type="transmembrane region" description="Helical" evidence="1">
    <location>
        <begin position="318"/>
        <end position="338"/>
    </location>
</feature>
<feature type="site" description="Cleavage; by caspase-3, caspase-6 and caspase-7" evidence="6">
    <location>
        <begin position="357"/>
        <end position="358"/>
    </location>
</feature>
<feature type="mutagenesis site" description="In 2DA mutant; abolished cleavage by caspase, preventing phospholipid scramblase activity." evidence="2">
    <original>DETD</original>
    <variation>AETA</variation>
    <location>
        <begin position="354"/>
        <end position="357"/>
    </location>
</feature>
<name>XKR9_MOUSE</name>
<proteinExistence type="evidence at protein level"/>
<organism>
    <name type="scientific">Mus musculus</name>
    <name type="common">Mouse</name>
    <dbReference type="NCBI Taxonomy" id="10090"/>
    <lineage>
        <taxon>Eukaryota</taxon>
        <taxon>Metazoa</taxon>
        <taxon>Chordata</taxon>
        <taxon>Craniata</taxon>
        <taxon>Vertebrata</taxon>
        <taxon>Euteleostomi</taxon>
        <taxon>Mammalia</taxon>
        <taxon>Eutheria</taxon>
        <taxon>Euarchontoglires</taxon>
        <taxon>Glires</taxon>
        <taxon>Rodentia</taxon>
        <taxon>Myomorpha</taxon>
        <taxon>Muroidea</taxon>
        <taxon>Muridae</taxon>
        <taxon>Murinae</taxon>
        <taxon>Mus</taxon>
        <taxon>Mus</taxon>
    </lineage>
</organism>